<feature type="chain" id="PRO_0000224443" description="Valine--tRNA ligase">
    <location>
        <begin position="1"/>
        <end position="966"/>
    </location>
</feature>
<feature type="coiled-coil region" evidence="1">
    <location>
        <begin position="348"/>
        <end position="368"/>
    </location>
</feature>
<feature type="coiled-coil region" evidence="1">
    <location>
        <begin position="939"/>
        <end position="960"/>
    </location>
</feature>
<feature type="short sequence motif" description="'HIGH' region">
    <location>
        <begin position="48"/>
        <end position="58"/>
    </location>
</feature>
<feature type="short sequence motif" description="'KMSKS' region">
    <location>
        <begin position="566"/>
        <end position="570"/>
    </location>
</feature>
<feature type="binding site" evidence="1">
    <location>
        <position position="569"/>
    </location>
    <ligand>
        <name>ATP</name>
        <dbReference type="ChEBI" id="CHEBI:30616"/>
    </ligand>
</feature>
<sequence length="966" mass="114272">MIINTIDKIYNPKNIEESIYNFWEKSNYFEPDIINNYKKNYCIMMPPPNITGGLHLGHAFQQTIMDILVRYQRMNGKNVLWASGLDHAGIATQILIEKNFYNKKNSIKDNHDPHSLIKEVWLWKEKSEKFINYQIKRLGHSVSWKNKHFTMDPEISLAVKEAFIQLYTNNLIYKGKQLVNWDSKLQTAISDLEVSHKQKSDFIWYIQYQLEYNTSHINNQKKNADYLTIATTRPETILGDVAIAVNPEDPRYSHLIGKYVFTPITNRRIPIISDKFVNINKGTGCVKITPAHDFNDYIIGKKYKLPMINIFSTYKTILTIPEISNNQGQPYIQSNDQYHIPKMFHNLDYKDARKKIIEECKRLKILEDIKTHQLTVPINNRTGTIIEPMLTDQWFIKTKFLAKQAINAVTNEKIKFIPKNYTNIYLQWMNEIQDWCISRQIWWGHRIPVWYDNNNTIYVGHCEKDIRIKNQLNKDIQLSQDNNVLDTWFSSSLWTFSSLGWPKNNTLLKMFHPTNIIISGFDIIFFWIARMIMMTMYLVKDQNNNAQIPFKKIYITGLMRDKFGQKMSKSKGNGIDPIDIIDGISKKKLLKKQLKENSQSKSISSIIKYINTQFPNGIKPYGADTLRLTLTALASSGQDIHWDMHKLESYHNFCNKLWNVSKFVITHTDNYHYDIDTKNKKIFSLSDRWITSKLHQTIQKFSQALNDYRFDHTVNILYEFIWHQFCDWYIEFTKPILYHSTNTLQLISTRYTLITSLESILRLSHPIIPFITEKIWQKIHSIVTTNNKHTIMLQSFPKYDSNYIDLESISDIEWIQNLIAEIRMIRTYTGISYKIPLDIGFYNTSNHIKECISENYHILTKILQLQTINFLEKNDISNNRYFKIPIKESELIIFIPNIFDKKTAIHKFNKEIKLINYKIHLLEQKMNNTNYSLNLQHSFKKSQEKLNHYNKTKNKLLNQYFIVKNL</sequence>
<comment type="function">
    <text evidence="1">Catalyzes the attachment of valine to tRNA(Val). As ValRS can inadvertently accommodate and process structurally similar amino acids such as threonine, to avoid such errors, it has a 'posttransfer' editing activity that hydrolyzes mischarged Thr-tRNA(Val) in a tRNA-dependent manner.</text>
</comment>
<comment type="catalytic activity">
    <reaction evidence="1">
        <text>tRNA(Val) + L-valine + ATP = L-valyl-tRNA(Val) + AMP + diphosphate</text>
        <dbReference type="Rhea" id="RHEA:10704"/>
        <dbReference type="Rhea" id="RHEA-COMP:9672"/>
        <dbReference type="Rhea" id="RHEA-COMP:9708"/>
        <dbReference type="ChEBI" id="CHEBI:30616"/>
        <dbReference type="ChEBI" id="CHEBI:33019"/>
        <dbReference type="ChEBI" id="CHEBI:57762"/>
        <dbReference type="ChEBI" id="CHEBI:78442"/>
        <dbReference type="ChEBI" id="CHEBI:78537"/>
        <dbReference type="ChEBI" id="CHEBI:456215"/>
        <dbReference type="EC" id="6.1.1.9"/>
    </reaction>
</comment>
<comment type="subunit">
    <text evidence="1">Monomer.</text>
</comment>
<comment type="subcellular location">
    <subcellularLocation>
        <location evidence="1">Cytoplasm</location>
    </subcellularLocation>
</comment>
<comment type="domain">
    <text evidence="1">ValRS has two distinct active sites: one for aminoacylation and one for editing. The misactivated threonine is translocated from the active site to the editing site.</text>
</comment>
<comment type="domain">
    <text evidence="1">The C-terminal coiled-coil domain is crucial for aminoacylation activity.</text>
</comment>
<comment type="similarity">
    <text evidence="1">Belongs to the class-I aminoacyl-tRNA synthetase family. ValS type 1 subfamily.</text>
</comment>
<keyword id="KW-0030">Aminoacyl-tRNA synthetase</keyword>
<keyword id="KW-0067">ATP-binding</keyword>
<keyword id="KW-0175">Coiled coil</keyword>
<keyword id="KW-0963">Cytoplasm</keyword>
<keyword id="KW-0436">Ligase</keyword>
<keyword id="KW-0547">Nucleotide-binding</keyword>
<keyword id="KW-0648">Protein biosynthesis</keyword>
<keyword id="KW-1185">Reference proteome</keyword>
<reference key="1">
    <citation type="journal article" date="2003" name="Proc. Natl. Acad. Sci. U.S.A.">
        <title>The genome sequence of Blochmannia floridanus: comparative analysis of reduced genomes.</title>
        <authorList>
            <person name="Gil R."/>
            <person name="Silva F.J."/>
            <person name="Zientz E."/>
            <person name="Delmotte F."/>
            <person name="Gonzalez-Candelas F."/>
            <person name="Latorre A."/>
            <person name="Rausell C."/>
            <person name="Kamerbeek J."/>
            <person name="Gadau J."/>
            <person name="Hoelldobler B."/>
            <person name="van Ham R.C.H.J."/>
            <person name="Gross R."/>
            <person name="Moya A."/>
        </authorList>
    </citation>
    <scope>NUCLEOTIDE SEQUENCE [LARGE SCALE GENOMIC DNA]</scope>
</reference>
<gene>
    <name evidence="1" type="primary">valS</name>
    <name type="ordered locus">Bfl033</name>
</gene>
<proteinExistence type="inferred from homology"/>
<protein>
    <recommendedName>
        <fullName evidence="1">Valine--tRNA ligase</fullName>
        <ecNumber evidence="1">6.1.1.9</ecNumber>
    </recommendedName>
    <alternativeName>
        <fullName evidence="1">Valyl-tRNA synthetase</fullName>
        <shortName evidence="1">ValRS</shortName>
    </alternativeName>
</protein>
<evidence type="ECO:0000255" key="1">
    <source>
        <dbReference type="HAMAP-Rule" id="MF_02004"/>
    </source>
</evidence>
<organism>
    <name type="scientific">Blochmanniella floridana</name>
    <dbReference type="NCBI Taxonomy" id="203907"/>
    <lineage>
        <taxon>Bacteria</taxon>
        <taxon>Pseudomonadati</taxon>
        <taxon>Pseudomonadota</taxon>
        <taxon>Gammaproteobacteria</taxon>
        <taxon>Enterobacterales</taxon>
        <taxon>Enterobacteriaceae</taxon>
        <taxon>ant endosymbionts</taxon>
        <taxon>Candidatus Blochmanniella</taxon>
    </lineage>
</organism>
<name>SYV_BLOFL</name>
<dbReference type="EC" id="6.1.1.9" evidence="1"/>
<dbReference type="EMBL" id="BX248583">
    <property type="protein sequence ID" value="CAD83561.1"/>
    <property type="molecule type" value="Genomic_DNA"/>
</dbReference>
<dbReference type="SMR" id="Q7VQT2"/>
<dbReference type="STRING" id="203907.Bfl033"/>
<dbReference type="KEGG" id="bfl:Bfl033"/>
<dbReference type="eggNOG" id="COG0525">
    <property type="taxonomic scope" value="Bacteria"/>
</dbReference>
<dbReference type="HOGENOM" id="CLU_001493_0_2_6"/>
<dbReference type="OrthoDB" id="9810365at2"/>
<dbReference type="Proteomes" id="UP000002192">
    <property type="component" value="Chromosome"/>
</dbReference>
<dbReference type="GO" id="GO:0005829">
    <property type="term" value="C:cytosol"/>
    <property type="evidence" value="ECO:0007669"/>
    <property type="project" value="TreeGrafter"/>
</dbReference>
<dbReference type="GO" id="GO:0002161">
    <property type="term" value="F:aminoacyl-tRNA deacylase activity"/>
    <property type="evidence" value="ECO:0007669"/>
    <property type="project" value="InterPro"/>
</dbReference>
<dbReference type="GO" id="GO:0005524">
    <property type="term" value="F:ATP binding"/>
    <property type="evidence" value="ECO:0007669"/>
    <property type="project" value="UniProtKB-UniRule"/>
</dbReference>
<dbReference type="GO" id="GO:0004832">
    <property type="term" value="F:valine-tRNA ligase activity"/>
    <property type="evidence" value="ECO:0007669"/>
    <property type="project" value="UniProtKB-UniRule"/>
</dbReference>
<dbReference type="GO" id="GO:0006438">
    <property type="term" value="P:valyl-tRNA aminoacylation"/>
    <property type="evidence" value="ECO:0007669"/>
    <property type="project" value="UniProtKB-UniRule"/>
</dbReference>
<dbReference type="CDD" id="cd07962">
    <property type="entry name" value="Anticodon_Ia_Val"/>
    <property type="match status" value="1"/>
</dbReference>
<dbReference type="FunFam" id="3.40.50.620:FF:000032">
    <property type="entry name" value="Valine--tRNA ligase"/>
    <property type="match status" value="1"/>
</dbReference>
<dbReference type="FunFam" id="3.40.50.620:FF:000073">
    <property type="entry name" value="Valine--tRNA ligase"/>
    <property type="match status" value="1"/>
</dbReference>
<dbReference type="Gene3D" id="3.40.50.620">
    <property type="entry name" value="HUPs"/>
    <property type="match status" value="2"/>
</dbReference>
<dbReference type="Gene3D" id="1.10.730.10">
    <property type="entry name" value="Isoleucyl-tRNA Synthetase, Domain 1"/>
    <property type="match status" value="1"/>
</dbReference>
<dbReference type="HAMAP" id="MF_02004">
    <property type="entry name" value="Val_tRNA_synth_type1"/>
    <property type="match status" value="1"/>
</dbReference>
<dbReference type="InterPro" id="IPR001412">
    <property type="entry name" value="aa-tRNA-synth_I_CS"/>
</dbReference>
<dbReference type="InterPro" id="IPR002300">
    <property type="entry name" value="aa-tRNA-synth_Ia"/>
</dbReference>
<dbReference type="InterPro" id="IPR033705">
    <property type="entry name" value="Anticodon_Ia_Val"/>
</dbReference>
<dbReference type="InterPro" id="IPR013155">
    <property type="entry name" value="M/V/L/I-tRNA-synth_anticd-bd"/>
</dbReference>
<dbReference type="InterPro" id="IPR014729">
    <property type="entry name" value="Rossmann-like_a/b/a_fold"/>
</dbReference>
<dbReference type="InterPro" id="IPR009080">
    <property type="entry name" value="tRNAsynth_Ia_anticodon-bd"/>
</dbReference>
<dbReference type="InterPro" id="IPR009008">
    <property type="entry name" value="Val/Leu/Ile-tRNA-synth_edit"/>
</dbReference>
<dbReference type="InterPro" id="IPR002303">
    <property type="entry name" value="Valyl-tRNA_ligase"/>
</dbReference>
<dbReference type="NCBIfam" id="NF004349">
    <property type="entry name" value="PRK05729.1"/>
    <property type="match status" value="1"/>
</dbReference>
<dbReference type="NCBIfam" id="TIGR00422">
    <property type="entry name" value="valS"/>
    <property type="match status" value="1"/>
</dbReference>
<dbReference type="PANTHER" id="PTHR11946:SF93">
    <property type="entry name" value="VALINE--TRNA LIGASE, CHLOROPLASTIC_MITOCHONDRIAL 2"/>
    <property type="match status" value="1"/>
</dbReference>
<dbReference type="PANTHER" id="PTHR11946">
    <property type="entry name" value="VALYL-TRNA SYNTHETASES"/>
    <property type="match status" value="1"/>
</dbReference>
<dbReference type="Pfam" id="PF08264">
    <property type="entry name" value="Anticodon_1"/>
    <property type="match status" value="1"/>
</dbReference>
<dbReference type="Pfam" id="PF00133">
    <property type="entry name" value="tRNA-synt_1"/>
    <property type="match status" value="1"/>
</dbReference>
<dbReference type="PRINTS" id="PR00986">
    <property type="entry name" value="TRNASYNTHVAL"/>
</dbReference>
<dbReference type="SUPFAM" id="SSF47323">
    <property type="entry name" value="Anticodon-binding domain of a subclass of class I aminoacyl-tRNA synthetases"/>
    <property type="match status" value="1"/>
</dbReference>
<dbReference type="SUPFAM" id="SSF52374">
    <property type="entry name" value="Nucleotidylyl transferase"/>
    <property type="match status" value="1"/>
</dbReference>
<dbReference type="SUPFAM" id="SSF50677">
    <property type="entry name" value="ValRS/IleRS/LeuRS editing domain"/>
    <property type="match status" value="1"/>
</dbReference>
<dbReference type="PROSITE" id="PS00178">
    <property type="entry name" value="AA_TRNA_LIGASE_I"/>
    <property type="match status" value="1"/>
</dbReference>
<accession>Q7VQT2</accession>